<sequence>MGVYLSTPKTEKLSEDGENDKLKFGLSSMQGWRATMEDAHSALLDIDNDTSFFGVFDGHGGRVVAKFCAKYLHREVLRSEAYSAGDLGNAAHKAFFRMDEMMRGQRGWRELQALGDKINQISGMIEGLIWSPRGSDSNDQHDDWAFEEGPHSDFAGPTCGSTACVAIVRNSQLVVANAGDSRCVISRNGQAYNLSRDHKPELEAERERILKAGGYIQMGRVNGTINLSRAIGDIEFKQNKFLSPDKQMLTANPDINTVELCDDDDFLVLACDGIWDCMSSQQLVDFIHEHINTESSLSAVCERVLDRCLAPSTLGGEGCDNMTMILVQFKKPISQNKNVSPAEQSAADKQPTGDTHWSEIHVTEESSS</sequence>
<keyword id="KW-0025">Alternative splicing</keyword>
<keyword id="KW-0378">Hydrolase</keyword>
<keyword id="KW-0460">Magnesium</keyword>
<keyword id="KW-0464">Manganese</keyword>
<keyword id="KW-0479">Metal-binding</keyword>
<keyword id="KW-0904">Protein phosphatase</keyword>
<keyword id="KW-1185">Reference proteome</keyword>
<evidence type="ECO:0000250" key="1"/>
<evidence type="ECO:0000255" key="2">
    <source>
        <dbReference type="PROSITE-ProRule" id="PRU01082"/>
    </source>
</evidence>
<evidence type="ECO:0000256" key="3">
    <source>
        <dbReference type="SAM" id="MobiDB-lite"/>
    </source>
</evidence>
<evidence type="ECO:0000303" key="4">
    <source>
    </source>
</evidence>
<evidence type="ECO:0000305" key="5"/>
<evidence type="ECO:0000312" key="6">
    <source>
        <dbReference type="EMBL" id="EEE66134.1"/>
    </source>
</evidence>
<protein>
    <recommendedName>
        <fullName>Probable protein phosphatase 2C 58</fullName>
        <shortName>OsPP2C58</shortName>
        <ecNumber>3.1.3.16</ecNumber>
    </recommendedName>
</protein>
<dbReference type="EC" id="3.1.3.16"/>
<dbReference type="EMBL" id="AP005453">
    <property type="protein sequence ID" value="BAD38120.1"/>
    <property type="molecule type" value="Genomic_DNA"/>
</dbReference>
<dbReference type="EMBL" id="AP005453">
    <property type="protein sequence ID" value="BAD38121.1"/>
    <property type="molecule type" value="Genomic_DNA"/>
</dbReference>
<dbReference type="EMBL" id="AP008212">
    <property type="protein sequence ID" value="BAF20143.1"/>
    <property type="molecule type" value="Genomic_DNA"/>
</dbReference>
<dbReference type="EMBL" id="AP014962">
    <property type="protein sequence ID" value="BAS98907.1"/>
    <property type="molecule type" value="Genomic_DNA"/>
</dbReference>
<dbReference type="EMBL" id="AP014962">
    <property type="protein sequence ID" value="BAS98908.1"/>
    <property type="molecule type" value="Genomic_DNA"/>
</dbReference>
<dbReference type="EMBL" id="CM000143">
    <property type="protein sequence ID" value="EEE66134.1"/>
    <property type="molecule type" value="Genomic_DNA"/>
</dbReference>
<dbReference type="EMBL" id="AK112023">
    <property type="protein sequence ID" value="BAG99518.1"/>
    <property type="molecule type" value="mRNA"/>
</dbReference>
<dbReference type="EMBL" id="AK120711">
    <property type="protein sequence ID" value="BAH00138.1"/>
    <property type="molecule type" value="mRNA"/>
</dbReference>
<dbReference type="RefSeq" id="XP_015640873.1">
    <property type="nucleotide sequence ID" value="XM_015785387.1"/>
</dbReference>
<dbReference type="RefSeq" id="XP_015640874.1">
    <property type="nucleotide sequence ID" value="XM_015785388.1"/>
</dbReference>
<dbReference type="RefSeq" id="XP_015640875.1">
    <property type="nucleotide sequence ID" value="XM_015785389.1"/>
</dbReference>
<dbReference type="SMR" id="Q67UP9"/>
<dbReference type="FunCoup" id="Q67UP9">
    <property type="interactions" value="3427"/>
</dbReference>
<dbReference type="STRING" id="39947.Q67UP9"/>
<dbReference type="PaxDb" id="39947-Q67UP9"/>
<dbReference type="EnsemblPlants" id="Os06t0651600-01">
    <molecule id="Q67UP9-1"/>
    <property type="protein sequence ID" value="Os06t0651600-01"/>
    <property type="gene ID" value="Os06g0651600"/>
</dbReference>
<dbReference type="Gramene" id="Os06t0651600-01">
    <molecule id="Q67UP9-1"/>
    <property type="protein sequence ID" value="Os06t0651600-01"/>
    <property type="gene ID" value="Os06g0651600"/>
</dbReference>
<dbReference type="KEGG" id="dosa:Os06g0651600"/>
<dbReference type="eggNOG" id="KOG0698">
    <property type="taxonomic scope" value="Eukaryota"/>
</dbReference>
<dbReference type="InParanoid" id="Q67UP9"/>
<dbReference type="OMA" id="CLLHDRP"/>
<dbReference type="OrthoDB" id="10264738at2759"/>
<dbReference type="Proteomes" id="UP000000763">
    <property type="component" value="Chromosome 6"/>
</dbReference>
<dbReference type="Proteomes" id="UP000007752">
    <property type="component" value="Chromosome 6"/>
</dbReference>
<dbReference type="Proteomes" id="UP000059680">
    <property type="component" value="Chromosome 6"/>
</dbReference>
<dbReference type="GO" id="GO:0046872">
    <property type="term" value="F:metal ion binding"/>
    <property type="evidence" value="ECO:0007669"/>
    <property type="project" value="UniProtKB-KW"/>
</dbReference>
<dbReference type="GO" id="GO:0004722">
    <property type="term" value="F:protein serine/threonine phosphatase activity"/>
    <property type="evidence" value="ECO:0007669"/>
    <property type="project" value="UniProtKB-EC"/>
</dbReference>
<dbReference type="GO" id="GO:0007165">
    <property type="term" value="P:signal transduction"/>
    <property type="evidence" value="ECO:0000318"/>
    <property type="project" value="GO_Central"/>
</dbReference>
<dbReference type="CDD" id="cd00143">
    <property type="entry name" value="PP2Cc"/>
    <property type="match status" value="1"/>
</dbReference>
<dbReference type="Gene3D" id="3.60.40.10">
    <property type="entry name" value="PPM-type phosphatase domain"/>
    <property type="match status" value="1"/>
</dbReference>
<dbReference type="InterPro" id="IPR015655">
    <property type="entry name" value="PP2C"/>
</dbReference>
<dbReference type="InterPro" id="IPR000222">
    <property type="entry name" value="PP2C_BS"/>
</dbReference>
<dbReference type="InterPro" id="IPR036457">
    <property type="entry name" value="PPM-type-like_dom_sf"/>
</dbReference>
<dbReference type="InterPro" id="IPR001932">
    <property type="entry name" value="PPM-type_phosphatase-like_dom"/>
</dbReference>
<dbReference type="PANTHER" id="PTHR13832">
    <property type="entry name" value="PROTEIN PHOSPHATASE 2C"/>
    <property type="match status" value="1"/>
</dbReference>
<dbReference type="PANTHER" id="PTHR13832:SF385">
    <property type="entry name" value="PROTEIN PHOSPHATASE 2C 58-RELATED"/>
    <property type="match status" value="1"/>
</dbReference>
<dbReference type="Pfam" id="PF00481">
    <property type="entry name" value="PP2C"/>
    <property type="match status" value="2"/>
</dbReference>
<dbReference type="SMART" id="SM00331">
    <property type="entry name" value="PP2C_SIG"/>
    <property type="match status" value="1"/>
</dbReference>
<dbReference type="SMART" id="SM00332">
    <property type="entry name" value="PP2Cc"/>
    <property type="match status" value="1"/>
</dbReference>
<dbReference type="SUPFAM" id="SSF81606">
    <property type="entry name" value="PP2C-like"/>
    <property type="match status" value="1"/>
</dbReference>
<dbReference type="PROSITE" id="PS01032">
    <property type="entry name" value="PPM_1"/>
    <property type="match status" value="1"/>
</dbReference>
<dbReference type="PROSITE" id="PS51746">
    <property type="entry name" value="PPM_2"/>
    <property type="match status" value="1"/>
</dbReference>
<gene>
    <name type="ordered locus">Os06g0651600</name>
    <name type="ordered locus">LOC_Os06g44210</name>
    <name evidence="6" type="ORF">OsJ_22185</name>
    <name type="ORF">P0453H04.39-1</name>
    <name type="ORF">P0453H04.39-2</name>
</gene>
<reference key="1">
    <citation type="journal article" date="2005" name="Nature">
        <title>The map-based sequence of the rice genome.</title>
        <authorList>
            <consortium name="International rice genome sequencing project (IRGSP)"/>
        </authorList>
    </citation>
    <scope>NUCLEOTIDE SEQUENCE [LARGE SCALE GENOMIC DNA]</scope>
    <source>
        <strain>cv. Nipponbare</strain>
    </source>
</reference>
<reference key="2">
    <citation type="journal article" date="2008" name="Nucleic Acids Res.">
        <title>The rice annotation project database (RAP-DB): 2008 update.</title>
        <authorList>
            <consortium name="The rice annotation project (RAP)"/>
        </authorList>
    </citation>
    <scope>GENOME REANNOTATION</scope>
    <source>
        <strain>cv. Nipponbare</strain>
    </source>
</reference>
<reference key="3">
    <citation type="journal article" date="2013" name="Rice">
        <title>Improvement of the Oryza sativa Nipponbare reference genome using next generation sequence and optical map data.</title>
        <authorList>
            <person name="Kawahara Y."/>
            <person name="de la Bastide M."/>
            <person name="Hamilton J.P."/>
            <person name="Kanamori H."/>
            <person name="McCombie W.R."/>
            <person name="Ouyang S."/>
            <person name="Schwartz D.C."/>
            <person name="Tanaka T."/>
            <person name="Wu J."/>
            <person name="Zhou S."/>
            <person name="Childs K.L."/>
            <person name="Davidson R.M."/>
            <person name="Lin H."/>
            <person name="Quesada-Ocampo L."/>
            <person name="Vaillancourt B."/>
            <person name="Sakai H."/>
            <person name="Lee S.S."/>
            <person name="Kim J."/>
            <person name="Numa H."/>
            <person name="Itoh T."/>
            <person name="Buell C.R."/>
            <person name="Matsumoto T."/>
        </authorList>
    </citation>
    <scope>GENOME REANNOTATION</scope>
    <source>
        <strain>cv. Nipponbare</strain>
    </source>
</reference>
<reference key="4">
    <citation type="journal article" date="2005" name="PLoS Biol.">
        <title>The genomes of Oryza sativa: a history of duplications.</title>
        <authorList>
            <person name="Yu J."/>
            <person name="Wang J."/>
            <person name="Lin W."/>
            <person name="Li S."/>
            <person name="Li H."/>
            <person name="Zhou J."/>
            <person name="Ni P."/>
            <person name="Dong W."/>
            <person name="Hu S."/>
            <person name="Zeng C."/>
            <person name="Zhang J."/>
            <person name="Zhang Y."/>
            <person name="Li R."/>
            <person name="Xu Z."/>
            <person name="Li S."/>
            <person name="Li X."/>
            <person name="Zheng H."/>
            <person name="Cong L."/>
            <person name="Lin L."/>
            <person name="Yin J."/>
            <person name="Geng J."/>
            <person name="Li G."/>
            <person name="Shi J."/>
            <person name="Liu J."/>
            <person name="Lv H."/>
            <person name="Li J."/>
            <person name="Wang J."/>
            <person name="Deng Y."/>
            <person name="Ran L."/>
            <person name="Shi X."/>
            <person name="Wang X."/>
            <person name="Wu Q."/>
            <person name="Li C."/>
            <person name="Ren X."/>
            <person name="Wang J."/>
            <person name="Wang X."/>
            <person name="Li D."/>
            <person name="Liu D."/>
            <person name="Zhang X."/>
            <person name="Ji Z."/>
            <person name="Zhao W."/>
            <person name="Sun Y."/>
            <person name="Zhang Z."/>
            <person name="Bao J."/>
            <person name="Han Y."/>
            <person name="Dong L."/>
            <person name="Ji J."/>
            <person name="Chen P."/>
            <person name="Wu S."/>
            <person name="Liu J."/>
            <person name="Xiao Y."/>
            <person name="Bu D."/>
            <person name="Tan J."/>
            <person name="Yang L."/>
            <person name="Ye C."/>
            <person name="Zhang J."/>
            <person name="Xu J."/>
            <person name="Zhou Y."/>
            <person name="Yu Y."/>
            <person name="Zhang B."/>
            <person name="Zhuang S."/>
            <person name="Wei H."/>
            <person name="Liu B."/>
            <person name="Lei M."/>
            <person name="Yu H."/>
            <person name="Li Y."/>
            <person name="Xu H."/>
            <person name="Wei S."/>
            <person name="He X."/>
            <person name="Fang L."/>
            <person name="Zhang Z."/>
            <person name="Zhang Y."/>
            <person name="Huang X."/>
            <person name="Su Z."/>
            <person name="Tong W."/>
            <person name="Li J."/>
            <person name="Tong Z."/>
            <person name="Li S."/>
            <person name="Ye J."/>
            <person name="Wang L."/>
            <person name="Fang L."/>
            <person name="Lei T."/>
            <person name="Chen C.-S."/>
            <person name="Chen H.-C."/>
            <person name="Xu Z."/>
            <person name="Li H."/>
            <person name="Huang H."/>
            <person name="Zhang F."/>
            <person name="Xu H."/>
            <person name="Li N."/>
            <person name="Zhao C."/>
            <person name="Li S."/>
            <person name="Dong L."/>
            <person name="Huang Y."/>
            <person name="Li L."/>
            <person name="Xi Y."/>
            <person name="Qi Q."/>
            <person name="Li W."/>
            <person name="Zhang B."/>
            <person name="Hu W."/>
            <person name="Zhang Y."/>
            <person name="Tian X."/>
            <person name="Jiao Y."/>
            <person name="Liang X."/>
            <person name="Jin J."/>
            <person name="Gao L."/>
            <person name="Zheng W."/>
            <person name="Hao B."/>
            <person name="Liu S.-M."/>
            <person name="Wang W."/>
            <person name="Yuan L."/>
            <person name="Cao M."/>
            <person name="McDermott J."/>
            <person name="Samudrala R."/>
            <person name="Wang J."/>
            <person name="Wong G.K.-S."/>
            <person name="Yang H."/>
        </authorList>
    </citation>
    <scope>NUCLEOTIDE SEQUENCE [LARGE SCALE GENOMIC DNA]</scope>
    <source>
        <strain>cv. Nipponbare</strain>
    </source>
</reference>
<reference key="5">
    <citation type="journal article" date="2003" name="Science">
        <title>Collection, mapping, and annotation of over 28,000 cDNA clones from japonica rice.</title>
        <authorList>
            <consortium name="The rice full-length cDNA consortium"/>
        </authorList>
    </citation>
    <scope>NUCLEOTIDE SEQUENCE [LARGE SCALE MRNA] (ISOFORMS 1 AND 2)</scope>
    <source>
        <strain>cv. Nipponbare</strain>
    </source>
</reference>
<reference key="6">
    <citation type="journal article" date="2008" name="BMC Genomics">
        <title>Genome-wide and expression analysis of protein phosphatase 2C in rice and Arabidopsis.</title>
        <authorList>
            <person name="Xue T."/>
            <person name="Wang D."/>
            <person name="Zhang S."/>
            <person name="Ehlting J."/>
            <person name="Ni F."/>
            <person name="Jacab S."/>
            <person name="Zheng C."/>
            <person name="Zhong Y."/>
        </authorList>
    </citation>
    <scope>GENE FAMILY</scope>
    <scope>NOMENCLATURE</scope>
</reference>
<proteinExistence type="evidence at transcript level"/>
<name>P2C58_ORYSJ</name>
<organism>
    <name type="scientific">Oryza sativa subsp. japonica</name>
    <name type="common">Rice</name>
    <dbReference type="NCBI Taxonomy" id="39947"/>
    <lineage>
        <taxon>Eukaryota</taxon>
        <taxon>Viridiplantae</taxon>
        <taxon>Streptophyta</taxon>
        <taxon>Embryophyta</taxon>
        <taxon>Tracheophyta</taxon>
        <taxon>Spermatophyta</taxon>
        <taxon>Magnoliopsida</taxon>
        <taxon>Liliopsida</taxon>
        <taxon>Poales</taxon>
        <taxon>Poaceae</taxon>
        <taxon>BOP clade</taxon>
        <taxon>Oryzoideae</taxon>
        <taxon>Oryzeae</taxon>
        <taxon>Oryzinae</taxon>
        <taxon>Oryza</taxon>
        <taxon>Oryza sativa</taxon>
    </lineage>
</organism>
<feature type="chain" id="PRO_0000363305" description="Probable protein phosphatase 2C 58">
    <location>
        <begin position="1"/>
        <end position="368"/>
    </location>
</feature>
<feature type="domain" description="PPM-type phosphatase" evidence="2">
    <location>
        <begin position="23"/>
        <end position="329"/>
    </location>
</feature>
<feature type="region of interest" description="Disordered" evidence="3">
    <location>
        <begin position="336"/>
        <end position="368"/>
    </location>
</feature>
<feature type="compositionally biased region" description="Basic and acidic residues" evidence="3">
    <location>
        <begin position="356"/>
        <end position="368"/>
    </location>
</feature>
<feature type="binding site" evidence="1">
    <location>
        <position position="57"/>
    </location>
    <ligand>
        <name>Mn(2+)</name>
        <dbReference type="ChEBI" id="CHEBI:29035"/>
        <label>1</label>
    </ligand>
</feature>
<feature type="binding site" evidence="1">
    <location>
        <position position="57"/>
    </location>
    <ligand>
        <name>Mn(2+)</name>
        <dbReference type="ChEBI" id="CHEBI:29035"/>
        <label>2</label>
    </ligand>
</feature>
<feature type="binding site" evidence="1">
    <location>
        <position position="58"/>
    </location>
    <ligand>
        <name>Mn(2+)</name>
        <dbReference type="ChEBI" id="CHEBI:29035"/>
        <label>1</label>
    </ligand>
</feature>
<feature type="binding site" evidence="1">
    <location>
        <position position="272"/>
    </location>
    <ligand>
        <name>Mn(2+)</name>
        <dbReference type="ChEBI" id="CHEBI:29035"/>
        <label>2</label>
    </ligand>
</feature>
<feature type="binding site" evidence="1">
    <location>
        <position position="320"/>
    </location>
    <ligand>
        <name>Mn(2+)</name>
        <dbReference type="ChEBI" id="CHEBI:29035"/>
        <label>2</label>
    </ligand>
</feature>
<feature type="splice variant" id="VSP_036276" description="In isoform 2." evidence="4">
    <location>
        <begin position="276"/>
        <end position="368"/>
    </location>
</feature>
<accession>Q67UP9</accession>
<accession>B9FQ92</accession>
<accession>Q67UP8</accession>
<comment type="catalytic activity">
    <reaction>
        <text>O-phospho-L-seryl-[protein] + H2O = L-seryl-[protein] + phosphate</text>
        <dbReference type="Rhea" id="RHEA:20629"/>
        <dbReference type="Rhea" id="RHEA-COMP:9863"/>
        <dbReference type="Rhea" id="RHEA-COMP:11604"/>
        <dbReference type="ChEBI" id="CHEBI:15377"/>
        <dbReference type="ChEBI" id="CHEBI:29999"/>
        <dbReference type="ChEBI" id="CHEBI:43474"/>
        <dbReference type="ChEBI" id="CHEBI:83421"/>
        <dbReference type="EC" id="3.1.3.16"/>
    </reaction>
</comment>
<comment type="catalytic activity">
    <reaction>
        <text>O-phospho-L-threonyl-[protein] + H2O = L-threonyl-[protein] + phosphate</text>
        <dbReference type="Rhea" id="RHEA:47004"/>
        <dbReference type="Rhea" id="RHEA-COMP:11060"/>
        <dbReference type="Rhea" id="RHEA-COMP:11605"/>
        <dbReference type="ChEBI" id="CHEBI:15377"/>
        <dbReference type="ChEBI" id="CHEBI:30013"/>
        <dbReference type="ChEBI" id="CHEBI:43474"/>
        <dbReference type="ChEBI" id="CHEBI:61977"/>
        <dbReference type="EC" id="3.1.3.16"/>
    </reaction>
</comment>
<comment type="cofactor">
    <cofactor evidence="1">
        <name>Mg(2+)</name>
        <dbReference type="ChEBI" id="CHEBI:18420"/>
    </cofactor>
    <cofactor evidence="1">
        <name>Mn(2+)</name>
        <dbReference type="ChEBI" id="CHEBI:29035"/>
    </cofactor>
    <text evidence="1">Binds 2 magnesium or manganese ions per subunit.</text>
</comment>
<comment type="alternative products">
    <event type="alternative splicing"/>
    <isoform>
        <id>Q67UP9-1</id>
        <name>1</name>
        <sequence type="displayed"/>
    </isoform>
    <isoform>
        <id>Q67UP9-2</id>
        <name>2</name>
        <sequence type="described" ref="VSP_036276"/>
    </isoform>
</comment>
<comment type="similarity">
    <text evidence="5">Belongs to the PP2C family.</text>
</comment>